<geneLocation type="chloroplast"/>
<feature type="chain" id="PRO_0000275221" description="ATP synthase epsilon chain, chloroplastic">
    <location>
        <begin position="1"/>
        <end position="138"/>
    </location>
</feature>
<evidence type="ECO:0000255" key="1">
    <source>
        <dbReference type="HAMAP-Rule" id="MF_00530"/>
    </source>
</evidence>
<gene>
    <name evidence="1" type="primary">atpE</name>
</gene>
<comment type="function">
    <text evidence="1">Produces ATP from ADP in the presence of a proton gradient across the membrane.</text>
</comment>
<comment type="subunit">
    <text evidence="1">F-type ATPases have 2 components, CF(1) - the catalytic core - and CF(0) - the membrane proton channel. CF(1) has five subunits: alpha(3), beta(3), gamma(1), delta(1), epsilon(1). CF(0) has three main subunits: a, b and c.</text>
</comment>
<comment type="subcellular location">
    <subcellularLocation>
        <location evidence="1">Plastid</location>
        <location evidence="1">Chloroplast thylakoid membrane</location>
        <topology evidence="1">Peripheral membrane protein</topology>
    </subcellularLocation>
</comment>
<comment type="similarity">
    <text evidence="1">Belongs to the ATPase epsilon chain family.</text>
</comment>
<accession>Q32RY9</accession>
<protein>
    <recommendedName>
        <fullName evidence="1">ATP synthase epsilon chain, chloroplastic</fullName>
    </recommendedName>
    <alternativeName>
        <fullName evidence="1">ATP synthase F1 sector epsilon subunit</fullName>
    </alternativeName>
    <alternativeName>
        <fullName evidence="1">F-ATPase epsilon subunit</fullName>
    </alternativeName>
</protein>
<keyword id="KW-0066">ATP synthesis</keyword>
<keyword id="KW-0139">CF(1)</keyword>
<keyword id="KW-0150">Chloroplast</keyword>
<keyword id="KW-0375">Hydrogen ion transport</keyword>
<keyword id="KW-0406">Ion transport</keyword>
<keyword id="KW-0472">Membrane</keyword>
<keyword id="KW-0934">Plastid</keyword>
<keyword id="KW-0793">Thylakoid</keyword>
<keyword id="KW-0813">Transport</keyword>
<proteinExistence type="inferred from homology"/>
<dbReference type="EMBL" id="AY958085">
    <property type="protein sequence ID" value="AAX45684.1"/>
    <property type="molecule type" value="Genomic_DNA"/>
</dbReference>
<dbReference type="RefSeq" id="YP_636387.1">
    <property type="nucleotide sequence ID" value="NC_008116.1"/>
</dbReference>
<dbReference type="SMR" id="Q32RY9"/>
<dbReference type="GeneID" id="4108643"/>
<dbReference type="GO" id="GO:0009535">
    <property type="term" value="C:chloroplast thylakoid membrane"/>
    <property type="evidence" value="ECO:0007669"/>
    <property type="project" value="UniProtKB-SubCell"/>
</dbReference>
<dbReference type="GO" id="GO:0045259">
    <property type="term" value="C:proton-transporting ATP synthase complex"/>
    <property type="evidence" value="ECO:0007669"/>
    <property type="project" value="UniProtKB-KW"/>
</dbReference>
<dbReference type="GO" id="GO:0005524">
    <property type="term" value="F:ATP binding"/>
    <property type="evidence" value="ECO:0007669"/>
    <property type="project" value="UniProtKB-UniRule"/>
</dbReference>
<dbReference type="GO" id="GO:0046933">
    <property type="term" value="F:proton-transporting ATP synthase activity, rotational mechanism"/>
    <property type="evidence" value="ECO:0007669"/>
    <property type="project" value="UniProtKB-UniRule"/>
</dbReference>
<dbReference type="CDD" id="cd12152">
    <property type="entry name" value="F1-ATPase_delta"/>
    <property type="match status" value="1"/>
</dbReference>
<dbReference type="FunFam" id="2.60.15.10:FF:000002">
    <property type="entry name" value="ATP synthase epsilon chain, chloroplastic"/>
    <property type="match status" value="1"/>
</dbReference>
<dbReference type="Gene3D" id="6.10.140.480">
    <property type="match status" value="1"/>
</dbReference>
<dbReference type="Gene3D" id="2.60.15.10">
    <property type="entry name" value="F0F1 ATP synthase delta/epsilon subunit, N-terminal"/>
    <property type="match status" value="1"/>
</dbReference>
<dbReference type="HAMAP" id="MF_00530">
    <property type="entry name" value="ATP_synth_epsil_bac"/>
    <property type="match status" value="1"/>
</dbReference>
<dbReference type="InterPro" id="IPR001469">
    <property type="entry name" value="ATP_synth_F1_dsu/esu"/>
</dbReference>
<dbReference type="InterPro" id="IPR020546">
    <property type="entry name" value="ATP_synth_F1_dsu/esu_N"/>
</dbReference>
<dbReference type="InterPro" id="IPR020547">
    <property type="entry name" value="ATP_synth_F1_esu_C"/>
</dbReference>
<dbReference type="InterPro" id="IPR036771">
    <property type="entry name" value="ATPsynth_dsu/esu_N"/>
</dbReference>
<dbReference type="NCBIfam" id="TIGR01216">
    <property type="entry name" value="ATP_synt_epsi"/>
    <property type="match status" value="1"/>
</dbReference>
<dbReference type="PANTHER" id="PTHR13822">
    <property type="entry name" value="ATP SYNTHASE DELTA/EPSILON CHAIN"/>
    <property type="match status" value="1"/>
</dbReference>
<dbReference type="PANTHER" id="PTHR13822:SF10">
    <property type="entry name" value="ATP SYNTHASE EPSILON CHAIN, CHLOROPLASTIC"/>
    <property type="match status" value="1"/>
</dbReference>
<dbReference type="Pfam" id="PF00401">
    <property type="entry name" value="ATP-synt_DE"/>
    <property type="match status" value="1"/>
</dbReference>
<dbReference type="Pfam" id="PF02823">
    <property type="entry name" value="ATP-synt_DE_N"/>
    <property type="match status" value="1"/>
</dbReference>
<dbReference type="SUPFAM" id="SSF51344">
    <property type="entry name" value="Epsilon subunit of F1F0-ATP synthase N-terminal domain"/>
    <property type="match status" value="1"/>
</dbReference>
<name>ATPE_STAPU</name>
<organism>
    <name type="scientific">Staurastrum punctulatum</name>
    <name type="common">Green alga</name>
    <name type="synonym">Cosmoastrum punctulatum</name>
    <dbReference type="NCBI Taxonomy" id="102822"/>
    <lineage>
        <taxon>Eukaryota</taxon>
        <taxon>Viridiplantae</taxon>
        <taxon>Streptophyta</taxon>
        <taxon>Zygnematophyceae</taxon>
        <taxon>Zygnematophycidae</taxon>
        <taxon>Desmidiales</taxon>
        <taxon>Desmidiaceae</taxon>
        <taxon>Staurastrum</taxon>
    </lineage>
</organism>
<sequence>MTLNLRVMAPNRIVWNSEAQEIILSTNSGQIGILPNHAPLLTALDIGVMKVRINSDWCTMALMGGFAMIENNQLTILVNEAEKGSDINLEEAQQTFDLAQESLNQATGKKQTIEANLAFQRAKARLEAVKANSSSAYN</sequence>
<reference key="1">
    <citation type="journal article" date="2005" name="BMC Biol.">
        <title>The complete chloroplast DNA sequences of the charophycean green algae Staurastrum and Zygnema reveal that the chloroplast genome underwent extensive changes during the evolution of the Zygnematales.</title>
        <authorList>
            <person name="Turmel M."/>
            <person name="Otis C."/>
            <person name="Lemieux C."/>
        </authorList>
    </citation>
    <scope>NUCLEOTIDE SEQUENCE [LARGE SCALE GENOMIC DNA]</scope>
</reference>